<accession>Q6AXT0</accession>
<comment type="subunit">
    <text evidence="2">Component of the mitochondrial ribosome large subunit (39S) which comprises a 16S rRNA and about 50 distinct proteins.</text>
</comment>
<comment type="subcellular location">
    <subcellularLocation>
        <location evidence="2">Mitochondrion</location>
    </subcellularLocation>
</comment>
<comment type="similarity">
    <text evidence="3">Belongs to the mitochondrion-specific ribosomal protein mL37 family.</text>
</comment>
<evidence type="ECO:0000250" key="1"/>
<evidence type="ECO:0000250" key="2">
    <source>
        <dbReference type="UniProtKB" id="Q9BZE1"/>
    </source>
</evidence>
<evidence type="ECO:0000305" key="3"/>
<organism>
    <name type="scientific">Rattus norvegicus</name>
    <name type="common">Rat</name>
    <dbReference type="NCBI Taxonomy" id="10116"/>
    <lineage>
        <taxon>Eukaryota</taxon>
        <taxon>Metazoa</taxon>
        <taxon>Chordata</taxon>
        <taxon>Craniata</taxon>
        <taxon>Vertebrata</taxon>
        <taxon>Euteleostomi</taxon>
        <taxon>Mammalia</taxon>
        <taxon>Eutheria</taxon>
        <taxon>Euarchontoglires</taxon>
        <taxon>Glires</taxon>
        <taxon>Rodentia</taxon>
        <taxon>Myomorpha</taxon>
        <taxon>Muroidea</taxon>
        <taxon>Muridae</taxon>
        <taxon>Murinae</taxon>
        <taxon>Rattus</taxon>
    </lineage>
</organism>
<gene>
    <name type="primary">Mrpl37</name>
</gene>
<reference key="1">
    <citation type="journal article" date="2004" name="Genome Res.">
        <title>The status, quality, and expansion of the NIH full-length cDNA project: the Mammalian Gene Collection (MGC).</title>
        <authorList>
            <consortium name="The MGC Project Team"/>
        </authorList>
    </citation>
    <scope>NUCLEOTIDE SEQUENCE [LARGE SCALE MRNA]</scope>
    <source>
        <tissue>Heart</tissue>
    </source>
</reference>
<sequence>MALASGPAMRALAGSARLGLGGYGAPKRGAYEWGVRSTRKPEPRPLDRVYEIPGLEPITYEGKKHFVPWLAKPIFPPWERGWIDPRFHRAAPIHEQPLYKEQPCYIFHQRCRLLEGMKQALWLTKTKLIEGLPKKVLSLVDDPTNHIENQEQRVLDIISHSRLWHSTEDIPKRETYCPLIVDNLLQLCKSQIIKHPSLARRTSAQNCSLATTWNRESLLLQVRGTSSTMLSAKDPLPPIASREEVEATRSHVLETFYPISPTIDLQECHVYEVKEDTGFREGYPYPHPHTLYILEKANLRPQRFLPEQLRAKMLLFAFANALAQARLLYGNTARVLEQPIVVQSVGTDGRVFQFLVLQLNTTDLTSSEGVKNLVWTDSDQLLYQHFWCRPVIKKKVVVEPVGPVDFQPETFKKFLALYLHGAV</sequence>
<protein>
    <recommendedName>
        <fullName evidence="3">Large ribosomal subunit protein mL37</fullName>
    </recommendedName>
    <alternativeName>
        <fullName>39S ribosomal protein L37, mitochondrial</fullName>
        <shortName>L37mt</shortName>
        <shortName>MRP-L37</shortName>
    </alternativeName>
</protein>
<name>RM37_RAT</name>
<keyword id="KW-0496">Mitochondrion</keyword>
<keyword id="KW-1185">Reference proteome</keyword>
<keyword id="KW-0687">Ribonucleoprotein</keyword>
<keyword id="KW-0689">Ribosomal protein</keyword>
<keyword id="KW-0809">Transit peptide</keyword>
<feature type="transit peptide" description="Mitochondrion" evidence="1">
    <location>
        <begin position="1"/>
        <end position="29"/>
    </location>
</feature>
<feature type="chain" id="PRO_0000045907" description="Large ribosomal subunit protein mL37">
    <location>
        <begin position="30"/>
        <end position="423"/>
    </location>
</feature>
<proteinExistence type="evidence at transcript level"/>
<dbReference type="EMBL" id="BC079328">
    <property type="protein sequence ID" value="AAH79328.1"/>
    <property type="molecule type" value="mRNA"/>
</dbReference>
<dbReference type="RefSeq" id="NP_001004235.1">
    <property type="nucleotide sequence ID" value="NM_001004235.2"/>
</dbReference>
<dbReference type="SMR" id="Q6AXT0"/>
<dbReference type="FunCoup" id="Q6AXT0">
    <property type="interactions" value="1630"/>
</dbReference>
<dbReference type="STRING" id="10116.ENSRNOP00000012102"/>
<dbReference type="iPTMnet" id="Q6AXT0"/>
<dbReference type="PhosphoSitePlus" id="Q6AXT0"/>
<dbReference type="jPOST" id="Q6AXT0"/>
<dbReference type="PaxDb" id="10116-ENSRNOP00000012102"/>
<dbReference type="Ensembl" id="ENSRNOT00000012102.6">
    <property type="protein sequence ID" value="ENSRNOP00000012102.3"/>
    <property type="gene ID" value="ENSRNOG00000009078.6"/>
</dbReference>
<dbReference type="GeneID" id="56281"/>
<dbReference type="KEGG" id="rno:56281"/>
<dbReference type="UCSC" id="RGD:619820">
    <property type="organism name" value="rat"/>
</dbReference>
<dbReference type="AGR" id="RGD:619820"/>
<dbReference type="CTD" id="51253"/>
<dbReference type="RGD" id="619820">
    <property type="gene designation" value="Mrpl37"/>
</dbReference>
<dbReference type="eggNOG" id="ENOG502QQAQ">
    <property type="taxonomic scope" value="Eukaryota"/>
</dbReference>
<dbReference type="GeneTree" id="ENSGT00390000000867"/>
<dbReference type="HOGENOM" id="CLU_037022_1_0_1"/>
<dbReference type="InParanoid" id="Q6AXT0"/>
<dbReference type="OMA" id="WERGWHD"/>
<dbReference type="OrthoDB" id="5835618at2759"/>
<dbReference type="PhylomeDB" id="Q6AXT0"/>
<dbReference type="TreeFam" id="TF323297"/>
<dbReference type="Reactome" id="R-RNO-5389840">
    <property type="pathway name" value="Mitochondrial translation elongation"/>
</dbReference>
<dbReference type="Reactome" id="R-RNO-5419276">
    <property type="pathway name" value="Mitochondrial translation termination"/>
</dbReference>
<dbReference type="PRO" id="PR:Q6AXT0"/>
<dbReference type="Proteomes" id="UP000002494">
    <property type="component" value="Chromosome 5"/>
</dbReference>
<dbReference type="Bgee" id="ENSRNOG00000009078">
    <property type="expression patterns" value="Expressed in heart and 20 other cell types or tissues"/>
</dbReference>
<dbReference type="ExpressionAtlas" id="Q6AXT0">
    <property type="expression patterns" value="baseline and differential"/>
</dbReference>
<dbReference type="GO" id="GO:0005762">
    <property type="term" value="C:mitochondrial large ribosomal subunit"/>
    <property type="evidence" value="ECO:0000250"/>
    <property type="project" value="UniProtKB"/>
</dbReference>
<dbReference type="GO" id="GO:0005739">
    <property type="term" value="C:mitochondrion"/>
    <property type="evidence" value="ECO:0000318"/>
    <property type="project" value="GO_Central"/>
</dbReference>
<dbReference type="GO" id="GO:0003735">
    <property type="term" value="F:structural constituent of ribosome"/>
    <property type="evidence" value="ECO:0007669"/>
    <property type="project" value="InterPro"/>
</dbReference>
<dbReference type="GO" id="GO:0006412">
    <property type="term" value="P:translation"/>
    <property type="evidence" value="ECO:0007669"/>
    <property type="project" value="InterPro"/>
</dbReference>
<dbReference type="InterPro" id="IPR052482">
    <property type="entry name" value="mtLSU_mL37"/>
</dbReference>
<dbReference type="InterPro" id="IPR010793">
    <property type="entry name" value="Ribosomal_mL37/mL65"/>
</dbReference>
<dbReference type="PANTHER" id="PTHR15889:SF2">
    <property type="entry name" value="LARGE RIBOSOMAL SUBUNIT PROTEIN ML37"/>
    <property type="match status" value="1"/>
</dbReference>
<dbReference type="PANTHER" id="PTHR15889">
    <property type="entry name" value="MITOCHONDRIAL RIBOSOMAL PROTEIN L37"/>
    <property type="match status" value="1"/>
</dbReference>
<dbReference type="Pfam" id="PF07147">
    <property type="entry name" value="PDCD9"/>
    <property type="match status" value="1"/>
</dbReference>